<accession>P68669</accession>
<accession>Q07482</accession>
<name>COAT2_XANCP</name>
<proteinExistence type="predicted"/>
<dbReference type="EMBL" id="AE008922">
    <property type="protein sequence ID" value="AAM41349.1"/>
    <property type="molecule type" value="Genomic_DNA"/>
</dbReference>
<dbReference type="EMBL" id="AE008922">
    <property type="protein sequence ID" value="AAM41362.1"/>
    <property type="molecule type" value="Genomic_DNA"/>
</dbReference>
<dbReference type="RefSeq" id="NP_637425.1">
    <property type="nucleotide sequence ID" value="NC_003902.1"/>
</dbReference>
<dbReference type="RefSeq" id="NP_637438.1">
    <property type="nucleotide sequence ID" value="NC_003902.1"/>
</dbReference>
<dbReference type="STRING" id="190485.XCC2060"/>
<dbReference type="EnsemblBacteria" id="AAM41349">
    <property type="protein sequence ID" value="AAM41349"/>
    <property type="gene ID" value="XCC2060"/>
</dbReference>
<dbReference type="EnsemblBacteria" id="AAM41362">
    <property type="protein sequence ID" value="AAM41362"/>
    <property type="gene ID" value="XCC2073"/>
</dbReference>
<dbReference type="KEGG" id="xcc:XCC2060"/>
<dbReference type="KEGG" id="xcc:XCC2073"/>
<dbReference type="HOGENOM" id="CLU_3241455_0_0_6"/>
<dbReference type="Proteomes" id="UP000001010">
    <property type="component" value="Chromosome"/>
</dbReference>
<keyword id="KW-1185">Reference proteome</keyword>
<gene>
    <name type="primary">gVII-1</name>
    <name type="ordered locus">XCC2060</name>
</gene>
<gene>
    <name type="primary">gVII-2</name>
    <name type="ordered locus">XCC2073</name>
</gene>
<protein>
    <recommendedName>
        <fullName>Phi-Lf prophage-derived putative minor coat protein</fullName>
    </recommendedName>
</protein>
<feature type="chain" id="PRO_0000098229" description="Phi-Lf prophage-derived putative minor coat protein">
    <location>
        <begin position="1"/>
        <end position="43"/>
    </location>
</feature>
<organism>
    <name type="scientific">Xanthomonas campestris pv. campestris (strain ATCC 33913 / DSM 3586 / NCPPB 528 / LMG 568 / P 25)</name>
    <dbReference type="NCBI Taxonomy" id="190485"/>
    <lineage>
        <taxon>Bacteria</taxon>
        <taxon>Pseudomonadati</taxon>
        <taxon>Pseudomonadota</taxon>
        <taxon>Gammaproteobacteria</taxon>
        <taxon>Lysobacterales</taxon>
        <taxon>Lysobacteraceae</taxon>
        <taxon>Xanthomonas</taxon>
    </lineage>
</organism>
<sequence length="43" mass="4683">MARWCPPANRSASAAATCSSVVANTACMRWCKKRSQCPARRTP</sequence>
<reference key="1">
    <citation type="journal article" date="2002" name="Nature">
        <title>Comparison of the genomes of two Xanthomonas pathogens with differing host specificities.</title>
        <authorList>
            <person name="da Silva A.C.R."/>
            <person name="Ferro J.A."/>
            <person name="Reinach F.C."/>
            <person name="Farah C.S."/>
            <person name="Furlan L.R."/>
            <person name="Quaggio R.B."/>
            <person name="Monteiro-Vitorello C.B."/>
            <person name="Van Sluys M.A."/>
            <person name="Almeida N.F. Jr."/>
            <person name="Alves L.M.C."/>
            <person name="do Amaral A.M."/>
            <person name="Bertolini M.C."/>
            <person name="Camargo L.E.A."/>
            <person name="Camarotte G."/>
            <person name="Cannavan F."/>
            <person name="Cardozo J."/>
            <person name="Chambergo F."/>
            <person name="Ciapina L.P."/>
            <person name="Cicarelli R.M.B."/>
            <person name="Coutinho L.L."/>
            <person name="Cursino-Santos J.R."/>
            <person name="El-Dorry H."/>
            <person name="Faria J.B."/>
            <person name="Ferreira A.J.S."/>
            <person name="Ferreira R.C.C."/>
            <person name="Ferro M.I.T."/>
            <person name="Formighieri E.F."/>
            <person name="Franco M.C."/>
            <person name="Greggio C.C."/>
            <person name="Gruber A."/>
            <person name="Katsuyama A.M."/>
            <person name="Kishi L.T."/>
            <person name="Leite R.P."/>
            <person name="Lemos E.G.M."/>
            <person name="Lemos M.V.F."/>
            <person name="Locali E.C."/>
            <person name="Machado M.A."/>
            <person name="Madeira A.M.B.N."/>
            <person name="Martinez-Rossi N.M."/>
            <person name="Martins E.C."/>
            <person name="Meidanis J."/>
            <person name="Menck C.F.M."/>
            <person name="Miyaki C.Y."/>
            <person name="Moon D.H."/>
            <person name="Moreira L.M."/>
            <person name="Novo M.T.M."/>
            <person name="Okura V.K."/>
            <person name="Oliveira M.C."/>
            <person name="Oliveira V.R."/>
            <person name="Pereira H.A."/>
            <person name="Rossi A."/>
            <person name="Sena J.A.D."/>
            <person name="Silva C."/>
            <person name="de Souza R.F."/>
            <person name="Spinola L.A.F."/>
            <person name="Takita M.A."/>
            <person name="Tamura R.E."/>
            <person name="Teixeira E.C."/>
            <person name="Tezza R.I.D."/>
            <person name="Trindade dos Santos M."/>
            <person name="Truffi D."/>
            <person name="Tsai S.M."/>
            <person name="White F.F."/>
            <person name="Setubal J.C."/>
            <person name="Kitajima J.P."/>
        </authorList>
    </citation>
    <scope>NUCLEOTIDE SEQUENCE [LARGE SCALE GENOMIC DNA]</scope>
    <source>
        <strain>ATCC 33913 / DSM 3586 / NCPPB 528 / LMG 568 / P 25</strain>
    </source>
</reference>